<dbReference type="EC" id="5.1.1.1"/>
<dbReference type="EMBL" id="AE007869">
    <property type="protein sequence ID" value="AAK86889.1"/>
    <property type="molecule type" value="Genomic_DNA"/>
</dbReference>
<dbReference type="PIR" id="AG2709">
    <property type="entry name" value="AG2709"/>
</dbReference>
<dbReference type="PIR" id="H97491">
    <property type="entry name" value="H97491"/>
</dbReference>
<dbReference type="RefSeq" id="NP_354104.1">
    <property type="nucleotide sequence ID" value="NC_003062.2"/>
</dbReference>
<dbReference type="RefSeq" id="WP_010971382.1">
    <property type="nucleotide sequence ID" value="NC_003062.2"/>
</dbReference>
<dbReference type="SMR" id="P58736"/>
<dbReference type="STRING" id="176299.Atu1080"/>
<dbReference type="EnsemblBacteria" id="AAK86889">
    <property type="protein sequence ID" value="AAK86889"/>
    <property type="gene ID" value="Atu1080"/>
</dbReference>
<dbReference type="GeneID" id="1133118"/>
<dbReference type="KEGG" id="atu:Atu1080"/>
<dbReference type="PATRIC" id="fig|176299.10.peg.1095"/>
<dbReference type="eggNOG" id="COG0787">
    <property type="taxonomic scope" value="Bacteria"/>
</dbReference>
<dbReference type="HOGENOM" id="CLU_028393_1_1_5"/>
<dbReference type="OrthoDB" id="9813814at2"/>
<dbReference type="PhylomeDB" id="P58736"/>
<dbReference type="BioCyc" id="AGRO:ATU1080-MONOMER"/>
<dbReference type="UniPathway" id="UPA00042">
    <property type="reaction ID" value="UER00497"/>
</dbReference>
<dbReference type="UniPathway" id="UPA00219"/>
<dbReference type="Proteomes" id="UP000000813">
    <property type="component" value="Chromosome circular"/>
</dbReference>
<dbReference type="GO" id="GO:0005829">
    <property type="term" value="C:cytosol"/>
    <property type="evidence" value="ECO:0007669"/>
    <property type="project" value="TreeGrafter"/>
</dbReference>
<dbReference type="GO" id="GO:0008784">
    <property type="term" value="F:alanine racemase activity"/>
    <property type="evidence" value="ECO:0007669"/>
    <property type="project" value="UniProtKB-UniRule"/>
</dbReference>
<dbReference type="GO" id="GO:0030170">
    <property type="term" value="F:pyridoxal phosphate binding"/>
    <property type="evidence" value="ECO:0007669"/>
    <property type="project" value="UniProtKB-UniRule"/>
</dbReference>
<dbReference type="GO" id="GO:0071555">
    <property type="term" value="P:cell wall organization"/>
    <property type="evidence" value="ECO:0007669"/>
    <property type="project" value="UniProtKB-KW"/>
</dbReference>
<dbReference type="GO" id="GO:0030632">
    <property type="term" value="P:D-alanine biosynthetic process"/>
    <property type="evidence" value="ECO:0007669"/>
    <property type="project" value="UniProtKB-UniRule"/>
</dbReference>
<dbReference type="GO" id="GO:0009252">
    <property type="term" value="P:peptidoglycan biosynthetic process"/>
    <property type="evidence" value="ECO:0007669"/>
    <property type="project" value="UniProtKB-UniPathway"/>
</dbReference>
<dbReference type="GO" id="GO:0008360">
    <property type="term" value="P:regulation of cell shape"/>
    <property type="evidence" value="ECO:0007669"/>
    <property type="project" value="UniProtKB-KW"/>
</dbReference>
<dbReference type="CDD" id="cd00430">
    <property type="entry name" value="PLPDE_III_AR"/>
    <property type="match status" value="1"/>
</dbReference>
<dbReference type="Gene3D" id="3.20.20.10">
    <property type="entry name" value="Alanine racemase"/>
    <property type="match status" value="1"/>
</dbReference>
<dbReference type="Gene3D" id="2.40.37.10">
    <property type="entry name" value="Lyase, Ornithine Decarboxylase, Chain A, domain 1"/>
    <property type="match status" value="1"/>
</dbReference>
<dbReference type="HAMAP" id="MF_01201">
    <property type="entry name" value="Ala_racemase"/>
    <property type="match status" value="1"/>
</dbReference>
<dbReference type="InterPro" id="IPR000821">
    <property type="entry name" value="Ala_racemase"/>
</dbReference>
<dbReference type="InterPro" id="IPR009006">
    <property type="entry name" value="Ala_racemase/Decarboxylase_C"/>
</dbReference>
<dbReference type="InterPro" id="IPR011079">
    <property type="entry name" value="Ala_racemase_C"/>
</dbReference>
<dbReference type="InterPro" id="IPR001608">
    <property type="entry name" value="Ala_racemase_N"/>
</dbReference>
<dbReference type="InterPro" id="IPR020622">
    <property type="entry name" value="Ala_racemase_pyridoxalP-BS"/>
</dbReference>
<dbReference type="InterPro" id="IPR029066">
    <property type="entry name" value="PLP-binding_barrel"/>
</dbReference>
<dbReference type="NCBIfam" id="TIGR00492">
    <property type="entry name" value="alr"/>
    <property type="match status" value="1"/>
</dbReference>
<dbReference type="PANTHER" id="PTHR30511">
    <property type="entry name" value="ALANINE RACEMASE"/>
    <property type="match status" value="1"/>
</dbReference>
<dbReference type="PANTHER" id="PTHR30511:SF0">
    <property type="entry name" value="ALANINE RACEMASE, CATABOLIC-RELATED"/>
    <property type="match status" value="1"/>
</dbReference>
<dbReference type="Pfam" id="PF00842">
    <property type="entry name" value="Ala_racemase_C"/>
    <property type="match status" value="1"/>
</dbReference>
<dbReference type="Pfam" id="PF01168">
    <property type="entry name" value="Ala_racemase_N"/>
    <property type="match status" value="1"/>
</dbReference>
<dbReference type="PRINTS" id="PR00992">
    <property type="entry name" value="ALARACEMASE"/>
</dbReference>
<dbReference type="SMART" id="SM01005">
    <property type="entry name" value="Ala_racemase_C"/>
    <property type="match status" value="1"/>
</dbReference>
<dbReference type="SUPFAM" id="SSF50621">
    <property type="entry name" value="Alanine racemase C-terminal domain-like"/>
    <property type="match status" value="1"/>
</dbReference>
<dbReference type="SUPFAM" id="SSF51419">
    <property type="entry name" value="PLP-binding barrel"/>
    <property type="match status" value="1"/>
</dbReference>
<dbReference type="PROSITE" id="PS00395">
    <property type="entry name" value="ALANINE_RACEMASE"/>
    <property type="match status" value="1"/>
</dbReference>
<sequence length="391" mass="42091">MTDDFEDSFPDNETDAFEQAPLRLTVDLGALADNWRDMKKRSGRARTAAVVKADAYGLGIEDCGATLYHAGARDFFVATVAEGATLRSYAPEARIFVLSGIWQGQERQVFDNDLVPVLASEEQLSFWMATVAERGDHPCALHVDTGFNRLGLPLDDALFLADDVTRPASFDPVLVLSHLACADTPSSPMNRAQLESFRRVSAAFEGIESSLSASAGIFLGPDYHFDLTRPGIALYGGEAVNDVANPMRPVAKAEARIIQIREAGEGQTVSYGSSFLLKRASRLAIASVGYADGYQRSLSGSGIPLREMGHGGAYGVVNGHKVPVAGRVTMDLTIFDVTDVPANAIRAGDYIELFGPNVPVDETARAAGTIGYEMLTGLGLRYERQYLVADD</sequence>
<accession>P58736</accession>
<keyword id="KW-0133">Cell shape</keyword>
<keyword id="KW-0961">Cell wall biogenesis/degradation</keyword>
<keyword id="KW-0413">Isomerase</keyword>
<keyword id="KW-0573">Peptidoglycan synthesis</keyword>
<keyword id="KW-0663">Pyridoxal phosphate</keyword>
<keyword id="KW-1185">Reference proteome</keyword>
<gene>
    <name type="primary">alr</name>
    <name type="ordered locus">Atu1080</name>
    <name type="ORF">AGR_C_1996</name>
</gene>
<protein>
    <recommendedName>
        <fullName>Alanine racemase, biosynthetic</fullName>
        <ecNumber>5.1.1.1</ecNumber>
    </recommendedName>
</protein>
<proteinExistence type="inferred from homology"/>
<evidence type="ECO:0000250" key="1"/>
<evidence type="ECO:0000305" key="2"/>
<name>ALR1_AGRFC</name>
<organism>
    <name type="scientific">Agrobacterium fabrum (strain C58 / ATCC 33970)</name>
    <name type="common">Agrobacterium tumefaciens (strain C58)</name>
    <dbReference type="NCBI Taxonomy" id="176299"/>
    <lineage>
        <taxon>Bacteria</taxon>
        <taxon>Pseudomonadati</taxon>
        <taxon>Pseudomonadota</taxon>
        <taxon>Alphaproteobacteria</taxon>
        <taxon>Hyphomicrobiales</taxon>
        <taxon>Rhizobiaceae</taxon>
        <taxon>Rhizobium/Agrobacterium group</taxon>
        <taxon>Agrobacterium</taxon>
        <taxon>Agrobacterium tumefaciens complex</taxon>
    </lineage>
</organism>
<reference key="1">
    <citation type="journal article" date="2001" name="Science">
        <title>The genome of the natural genetic engineer Agrobacterium tumefaciens C58.</title>
        <authorList>
            <person name="Wood D.W."/>
            <person name="Setubal J.C."/>
            <person name="Kaul R."/>
            <person name="Monks D.E."/>
            <person name="Kitajima J.P."/>
            <person name="Okura V.K."/>
            <person name="Zhou Y."/>
            <person name="Chen L."/>
            <person name="Wood G.E."/>
            <person name="Almeida N.F. Jr."/>
            <person name="Woo L."/>
            <person name="Chen Y."/>
            <person name="Paulsen I.T."/>
            <person name="Eisen J.A."/>
            <person name="Karp P.D."/>
            <person name="Bovee D. Sr."/>
            <person name="Chapman P."/>
            <person name="Clendenning J."/>
            <person name="Deatherage G."/>
            <person name="Gillet W."/>
            <person name="Grant C."/>
            <person name="Kutyavin T."/>
            <person name="Levy R."/>
            <person name="Li M.-J."/>
            <person name="McClelland E."/>
            <person name="Palmieri A."/>
            <person name="Raymond C."/>
            <person name="Rouse G."/>
            <person name="Saenphimmachak C."/>
            <person name="Wu Z."/>
            <person name="Romero P."/>
            <person name="Gordon D."/>
            <person name="Zhang S."/>
            <person name="Yoo H."/>
            <person name="Tao Y."/>
            <person name="Biddle P."/>
            <person name="Jung M."/>
            <person name="Krespan W."/>
            <person name="Perry M."/>
            <person name="Gordon-Kamm B."/>
            <person name="Liao L."/>
            <person name="Kim S."/>
            <person name="Hendrick C."/>
            <person name="Zhao Z.-Y."/>
            <person name="Dolan M."/>
            <person name="Chumley F."/>
            <person name="Tingey S.V."/>
            <person name="Tomb J.-F."/>
            <person name="Gordon M.P."/>
            <person name="Olson M.V."/>
            <person name="Nester E.W."/>
        </authorList>
    </citation>
    <scope>NUCLEOTIDE SEQUENCE [LARGE SCALE GENOMIC DNA]</scope>
    <source>
        <strain>C58 / ATCC 33970</strain>
    </source>
</reference>
<reference key="2">
    <citation type="journal article" date="2001" name="Science">
        <title>Genome sequence of the plant pathogen and biotechnology agent Agrobacterium tumefaciens C58.</title>
        <authorList>
            <person name="Goodner B."/>
            <person name="Hinkle G."/>
            <person name="Gattung S."/>
            <person name="Miller N."/>
            <person name="Blanchard M."/>
            <person name="Qurollo B."/>
            <person name="Goldman B.S."/>
            <person name="Cao Y."/>
            <person name="Askenazi M."/>
            <person name="Halling C."/>
            <person name="Mullin L."/>
            <person name="Houmiel K."/>
            <person name="Gordon J."/>
            <person name="Vaudin M."/>
            <person name="Iartchouk O."/>
            <person name="Epp A."/>
            <person name="Liu F."/>
            <person name="Wollam C."/>
            <person name="Allinger M."/>
            <person name="Doughty D."/>
            <person name="Scott C."/>
            <person name="Lappas C."/>
            <person name="Markelz B."/>
            <person name="Flanagan C."/>
            <person name="Crowell C."/>
            <person name="Gurson J."/>
            <person name="Lomo C."/>
            <person name="Sear C."/>
            <person name="Strub G."/>
            <person name="Cielo C."/>
            <person name="Slater S."/>
        </authorList>
    </citation>
    <scope>NUCLEOTIDE SEQUENCE [LARGE SCALE GENOMIC DNA]</scope>
    <source>
        <strain>C58 / ATCC 33970</strain>
    </source>
</reference>
<feature type="chain" id="PRO_0000114492" description="Alanine racemase, biosynthetic">
    <location>
        <begin position="1"/>
        <end position="391"/>
    </location>
</feature>
<feature type="active site" description="Proton acceptor; specific for D-alanine" evidence="1">
    <location>
        <position position="52"/>
    </location>
</feature>
<feature type="active site" description="Proton acceptor; specific for L-alanine" evidence="1">
    <location>
        <position position="271"/>
    </location>
</feature>
<feature type="binding site" evidence="1">
    <location>
        <position position="149"/>
    </location>
    <ligand>
        <name>substrate</name>
    </ligand>
</feature>
<feature type="binding site" evidence="1">
    <location>
        <position position="330"/>
    </location>
    <ligand>
        <name>substrate</name>
    </ligand>
</feature>
<feature type="modified residue" description="N6-(pyridoxal phosphate)lysine" evidence="1">
    <location>
        <position position="52"/>
    </location>
</feature>
<comment type="function">
    <text evidence="1">Catalyzes the interconversion of L-alanine and D-alanine. Provides the D-alanine required for cell wall biosynthesis (By similarity).</text>
</comment>
<comment type="catalytic activity">
    <reaction>
        <text>L-alanine = D-alanine</text>
        <dbReference type="Rhea" id="RHEA:20249"/>
        <dbReference type="ChEBI" id="CHEBI:57416"/>
        <dbReference type="ChEBI" id="CHEBI:57972"/>
        <dbReference type="EC" id="5.1.1.1"/>
    </reaction>
</comment>
<comment type="cofactor">
    <cofactor evidence="1">
        <name>pyridoxal 5'-phosphate</name>
        <dbReference type="ChEBI" id="CHEBI:597326"/>
    </cofactor>
</comment>
<comment type="pathway">
    <text>Amino-acid biosynthesis; D-alanine biosynthesis; D-alanine from L-alanine: step 1/1.</text>
</comment>
<comment type="pathway">
    <text>Cell wall biogenesis; peptidoglycan biosynthesis.</text>
</comment>
<comment type="similarity">
    <text evidence="2">Belongs to the alanine racemase family.</text>
</comment>